<comment type="catalytic activity">
    <reaction evidence="1">
        <text>3'-dephospho-CoA + ATP = 2'-(5''-triphospho-alpha-D-ribosyl)-3'-dephospho-CoA + adenine</text>
        <dbReference type="Rhea" id="RHEA:15117"/>
        <dbReference type="ChEBI" id="CHEBI:16708"/>
        <dbReference type="ChEBI" id="CHEBI:30616"/>
        <dbReference type="ChEBI" id="CHEBI:57328"/>
        <dbReference type="ChEBI" id="CHEBI:61378"/>
        <dbReference type="EC" id="2.4.2.52"/>
    </reaction>
</comment>
<comment type="similarity">
    <text evidence="1">Belongs to the CitG/MdcB family.</text>
</comment>
<evidence type="ECO:0000255" key="1">
    <source>
        <dbReference type="HAMAP-Rule" id="MF_00397"/>
    </source>
</evidence>
<organism>
    <name type="scientific">Streptococcus pyogenes serotype M4 (strain MGAS10750)</name>
    <dbReference type="NCBI Taxonomy" id="370554"/>
    <lineage>
        <taxon>Bacteria</taxon>
        <taxon>Bacillati</taxon>
        <taxon>Bacillota</taxon>
        <taxon>Bacilli</taxon>
        <taxon>Lactobacillales</taxon>
        <taxon>Streptococcaceae</taxon>
        <taxon>Streptococcus</taxon>
    </lineage>
</organism>
<gene>
    <name evidence="1" type="primary">citG</name>
    <name type="ordered locus">MGAS10750_Spy1047</name>
</gene>
<sequence>MTKAVLTSISQLALKALLYEVSLSPKPGLVDRFDNGAHDDMSFMTFIDSMIALSPFFQAYIETGFAYAKEEPLLLFNRLRQLGQKAEETMFCATQGINTHKGLNFSMALLLGATGAYLARTPHLMTDLGRFSKEDTLAICRLVKPMTAHLIQTDLGHLNTKKEFTYGEQLFVTYGIKGPRGEASEGFTTLTDHALPYFRQMISQNDPETSQLRLLVYLMSIVEDGNLIHRGGIEAWKGVKADMRLLLQQDLSTTDLRLALSSYNQCLINQHLSPGGAADLLALTFYFAFLEKLL</sequence>
<reference key="1">
    <citation type="journal article" date="2006" name="Proc. Natl. Acad. Sci. U.S.A.">
        <title>Molecular genetic anatomy of inter- and intraserotype variation in the human bacterial pathogen group A Streptococcus.</title>
        <authorList>
            <person name="Beres S.B."/>
            <person name="Richter E.W."/>
            <person name="Nagiec M.J."/>
            <person name="Sumby P."/>
            <person name="Porcella S.F."/>
            <person name="DeLeo F.R."/>
            <person name="Musser J.M."/>
        </authorList>
    </citation>
    <scope>NUCLEOTIDE SEQUENCE [LARGE SCALE GENOMIC DNA]</scope>
    <source>
        <strain>MGAS10750</strain>
    </source>
</reference>
<dbReference type="EC" id="2.4.2.52" evidence="1"/>
<dbReference type="EMBL" id="CP000262">
    <property type="protein sequence ID" value="ABF37997.1"/>
    <property type="molecule type" value="Genomic_DNA"/>
</dbReference>
<dbReference type="KEGG" id="spi:MGAS10750_Spy1047"/>
<dbReference type="HOGENOM" id="CLU_056179_1_0_9"/>
<dbReference type="Proteomes" id="UP000002434">
    <property type="component" value="Chromosome"/>
</dbReference>
<dbReference type="GO" id="GO:0005524">
    <property type="term" value="F:ATP binding"/>
    <property type="evidence" value="ECO:0007669"/>
    <property type="project" value="UniProtKB-KW"/>
</dbReference>
<dbReference type="GO" id="GO:0046917">
    <property type="term" value="F:triphosphoribosyl-dephospho-CoA synthase activity"/>
    <property type="evidence" value="ECO:0007669"/>
    <property type="project" value="UniProtKB-UniRule"/>
</dbReference>
<dbReference type="GO" id="GO:0051191">
    <property type="term" value="P:prosthetic group biosynthetic process"/>
    <property type="evidence" value="ECO:0007669"/>
    <property type="project" value="TreeGrafter"/>
</dbReference>
<dbReference type="Gene3D" id="1.10.4200.10">
    <property type="entry name" value="Triphosphoribosyl-dephospho-CoA protein"/>
    <property type="match status" value="1"/>
</dbReference>
<dbReference type="HAMAP" id="MF_00397">
    <property type="entry name" value="CitG"/>
    <property type="match status" value="1"/>
</dbReference>
<dbReference type="InterPro" id="IPR002736">
    <property type="entry name" value="CitG"/>
</dbReference>
<dbReference type="InterPro" id="IPR017551">
    <property type="entry name" value="TriPribosyl-deP-CoA_syn_CitG"/>
</dbReference>
<dbReference type="NCBIfam" id="TIGR03125">
    <property type="entry name" value="citrate_citG"/>
    <property type="match status" value="1"/>
</dbReference>
<dbReference type="PANTHER" id="PTHR30201:SF2">
    <property type="entry name" value="2-(5''-TRIPHOSPHORIBOSYL)-3'-DEPHOSPHOCOENZYME-A SYNTHASE"/>
    <property type="match status" value="1"/>
</dbReference>
<dbReference type="PANTHER" id="PTHR30201">
    <property type="entry name" value="TRIPHOSPHORIBOSYL-DEPHOSPHO-COA SYNTHASE"/>
    <property type="match status" value="1"/>
</dbReference>
<dbReference type="Pfam" id="PF01874">
    <property type="entry name" value="CitG"/>
    <property type="match status" value="1"/>
</dbReference>
<protein>
    <recommendedName>
        <fullName evidence="1">Probable 2-(5''-triphosphoribosyl)-3'-dephosphocoenzyme-A synthase</fullName>
        <shortName evidence="1">2-(5''-triphosphoribosyl)-3'-dephospho-CoA synthase</shortName>
        <ecNumber evidence="1">2.4.2.52</ecNumber>
    </recommendedName>
</protein>
<accession>Q1J6I6</accession>
<name>CITG_STRPF</name>
<feature type="chain" id="PRO_0000255418" description="Probable 2-(5''-triphosphoribosyl)-3'-dephosphocoenzyme-A synthase">
    <location>
        <begin position="1"/>
        <end position="294"/>
    </location>
</feature>
<keyword id="KW-0067">ATP-binding</keyword>
<keyword id="KW-0547">Nucleotide-binding</keyword>
<keyword id="KW-0808">Transferase</keyword>
<proteinExistence type="inferred from homology"/>